<gene>
    <name evidence="1" type="primary">murI</name>
    <name type="ordered locus">CBO3562</name>
    <name type="ordered locus">CLC_3542</name>
</gene>
<organism>
    <name type="scientific">Clostridium botulinum (strain Hall / ATCC 3502 / NCTC 13319 / Type A)</name>
    <dbReference type="NCBI Taxonomy" id="441771"/>
    <lineage>
        <taxon>Bacteria</taxon>
        <taxon>Bacillati</taxon>
        <taxon>Bacillota</taxon>
        <taxon>Clostridia</taxon>
        <taxon>Eubacteriales</taxon>
        <taxon>Clostridiaceae</taxon>
        <taxon>Clostridium</taxon>
    </lineage>
</organism>
<protein>
    <recommendedName>
        <fullName evidence="1">Glutamate racemase</fullName>
        <ecNumber evidence="1">5.1.1.3</ecNumber>
    </recommendedName>
</protein>
<name>MURI_CLOBH</name>
<keyword id="KW-0133">Cell shape</keyword>
<keyword id="KW-0961">Cell wall biogenesis/degradation</keyword>
<keyword id="KW-0413">Isomerase</keyword>
<keyword id="KW-0573">Peptidoglycan synthesis</keyword>
<keyword id="KW-1185">Reference proteome</keyword>
<reference key="1">
    <citation type="journal article" date="2007" name="Genome Res.">
        <title>Genome sequence of a proteolytic (Group I) Clostridium botulinum strain Hall A and comparative analysis of the clostridial genomes.</title>
        <authorList>
            <person name="Sebaihia M."/>
            <person name="Peck M.W."/>
            <person name="Minton N.P."/>
            <person name="Thomson N.R."/>
            <person name="Holden M.T.G."/>
            <person name="Mitchell W.J."/>
            <person name="Carter A.T."/>
            <person name="Bentley S.D."/>
            <person name="Mason D.R."/>
            <person name="Crossman L."/>
            <person name="Paul C.J."/>
            <person name="Ivens A."/>
            <person name="Wells-Bennik M.H.J."/>
            <person name="Davis I.J."/>
            <person name="Cerdeno-Tarraga A.M."/>
            <person name="Churcher C."/>
            <person name="Quail M.A."/>
            <person name="Chillingworth T."/>
            <person name="Feltwell T."/>
            <person name="Fraser A."/>
            <person name="Goodhead I."/>
            <person name="Hance Z."/>
            <person name="Jagels K."/>
            <person name="Larke N."/>
            <person name="Maddison M."/>
            <person name="Moule S."/>
            <person name="Mungall K."/>
            <person name="Norbertczak H."/>
            <person name="Rabbinowitsch E."/>
            <person name="Sanders M."/>
            <person name="Simmonds M."/>
            <person name="White B."/>
            <person name="Whithead S."/>
            <person name="Parkhill J."/>
        </authorList>
    </citation>
    <scope>NUCLEOTIDE SEQUENCE [LARGE SCALE GENOMIC DNA]</scope>
    <source>
        <strain>Hall / ATCC 3502 / NCTC 13319 / Type A</strain>
    </source>
</reference>
<reference key="2">
    <citation type="journal article" date="2007" name="PLoS ONE">
        <title>Analysis of the neurotoxin complex genes in Clostridium botulinum A1-A4 and B1 strains: BoNT/A3, /Ba4 and /B1 clusters are located within plasmids.</title>
        <authorList>
            <person name="Smith T.J."/>
            <person name="Hill K.K."/>
            <person name="Foley B.T."/>
            <person name="Detter J.C."/>
            <person name="Munk A.C."/>
            <person name="Bruce D.C."/>
            <person name="Doggett N.A."/>
            <person name="Smith L.A."/>
            <person name="Marks J.D."/>
            <person name="Xie G."/>
            <person name="Brettin T.S."/>
        </authorList>
    </citation>
    <scope>NUCLEOTIDE SEQUENCE [LARGE SCALE GENOMIC DNA]</scope>
    <source>
        <strain>Hall / ATCC 3502 / NCTC 13319 / Type A</strain>
    </source>
</reference>
<comment type="function">
    <text evidence="1">Provides the (R)-glutamate required for cell wall biosynthesis.</text>
</comment>
<comment type="catalytic activity">
    <reaction evidence="1">
        <text>L-glutamate = D-glutamate</text>
        <dbReference type="Rhea" id="RHEA:12813"/>
        <dbReference type="ChEBI" id="CHEBI:29985"/>
        <dbReference type="ChEBI" id="CHEBI:29986"/>
        <dbReference type="EC" id="5.1.1.3"/>
    </reaction>
</comment>
<comment type="pathway">
    <text evidence="1">Cell wall biogenesis; peptidoglycan biosynthesis.</text>
</comment>
<comment type="similarity">
    <text evidence="1">Belongs to the aspartate/glutamate racemases family.</text>
</comment>
<accession>A5I7T7</accession>
<accession>A7G919</accession>
<proteinExistence type="inferred from homology"/>
<dbReference type="EC" id="5.1.1.3" evidence="1"/>
<dbReference type="EMBL" id="CP000727">
    <property type="protein sequence ID" value="ABS39097.1"/>
    <property type="molecule type" value="Genomic_DNA"/>
</dbReference>
<dbReference type="EMBL" id="AM412317">
    <property type="protein sequence ID" value="CAL85122.1"/>
    <property type="molecule type" value="Genomic_DNA"/>
</dbReference>
<dbReference type="RefSeq" id="WP_012048400.1">
    <property type="nucleotide sequence ID" value="NC_009698.1"/>
</dbReference>
<dbReference type="RefSeq" id="YP_001256043.1">
    <property type="nucleotide sequence ID" value="NC_009495.1"/>
</dbReference>
<dbReference type="RefSeq" id="YP_001389284.1">
    <property type="nucleotide sequence ID" value="NC_009698.1"/>
</dbReference>
<dbReference type="SMR" id="A5I7T7"/>
<dbReference type="GeneID" id="5187853"/>
<dbReference type="KEGG" id="cbh:CLC_3542"/>
<dbReference type="KEGG" id="cbo:CBO3562"/>
<dbReference type="PATRIC" id="fig|413999.7.peg.3539"/>
<dbReference type="HOGENOM" id="CLU_052344_1_0_9"/>
<dbReference type="UniPathway" id="UPA00219"/>
<dbReference type="PRO" id="PR:A5I7T7"/>
<dbReference type="Proteomes" id="UP000001986">
    <property type="component" value="Chromosome"/>
</dbReference>
<dbReference type="GO" id="GO:0047661">
    <property type="term" value="F:amino-acid racemase activity"/>
    <property type="evidence" value="ECO:0000318"/>
    <property type="project" value="GO_Central"/>
</dbReference>
<dbReference type="GO" id="GO:0008881">
    <property type="term" value="F:glutamate racemase activity"/>
    <property type="evidence" value="ECO:0007669"/>
    <property type="project" value="UniProtKB-UniRule"/>
</dbReference>
<dbReference type="GO" id="GO:0071555">
    <property type="term" value="P:cell wall organization"/>
    <property type="evidence" value="ECO:0007669"/>
    <property type="project" value="UniProtKB-KW"/>
</dbReference>
<dbReference type="GO" id="GO:0009252">
    <property type="term" value="P:peptidoglycan biosynthetic process"/>
    <property type="evidence" value="ECO:0000318"/>
    <property type="project" value="GO_Central"/>
</dbReference>
<dbReference type="GO" id="GO:0008360">
    <property type="term" value="P:regulation of cell shape"/>
    <property type="evidence" value="ECO:0007669"/>
    <property type="project" value="UniProtKB-KW"/>
</dbReference>
<dbReference type="FunFam" id="3.40.50.1860:FF:000002">
    <property type="entry name" value="Glutamate racemase"/>
    <property type="match status" value="1"/>
</dbReference>
<dbReference type="Gene3D" id="3.40.50.1860">
    <property type="match status" value="2"/>
</dbReference>
<dbReference type="HAMAP" id="MF_00258">
    <property type="entry name" value="Glu_racemase"/>
    <property type="match status" value="1"/>
</dbReference>
<dbReference type="InterPro" id="IPR015942">
    <property type="entry name" value="Asp/Glu/hydantoin_racemase"/>
</dbReference>
<dbReference type="InterPro" id="IPR001920">
    <property type="entry name" value="Asp/Glu_race"/>
</dbReference>
<dbReference type="InterPro" id="IPR018187">
    <property type="entry name" value="Asp/Glu_racemase_AS_1"/>
</dbReference>
<dbReference type="InterPro" id="IPR033134">
    <property type="entry name" value="Asp/Glu_racemase_AS_2"/>
</dbReference>
<dbReference type="InterPro" id="IPR004391">
    <property type="entry name" value="Glu_race"/>
</dbReference>
<dbReference type="NCBIfam" id="TIGR00067">
    <property type="entry name" value="glut_race"/>
    <property type="match status" value="1"/>
</dbReference>
<dbReference type="PANTHER" id="PTHR21198">
    <property type="entry name" value="GLUTAMATE RACEMASE"/>
    <property type="match status" value="1"/>
</dbReference>
<dbReference type="PANTHER" id="PTHR21198:SF3">
    <property type="entry name" value="GLUTAMATE RACEMASE"/>
    <property type="match status" value="1"/>
</dbReference>
<dbReference type="Pfam" id="PF01177">
    <property type="entry name" value="Asp_Glu_race"/>
    <property type="match status" value="1"/>
</dbReference>
<dbReference type="SUPFAM" id="SSF53681">
    <property type="entry name" value="Aspartate/glutamate racemase"/>
    <property type="match status" value="2"/>
</dbReference>
<dbReference type="PROSITE" id="PS00923">
    <property type="entry name" value="ASP_GLU_RACEMASE_1"/>
    <property type="match status" value="1"/>
</dbReference>
<dbReference type="PROSITE" id="PS00924">
    <property type="entry name" value="ASP_GLU_RACEMASE_2"/>
    <property type="match status" value="1"/>
</dbReference>
<sequence length="257" mass="28741">MSINDKPIGFFDSGVGGISVLKEAFKLLPKEDFLYYGDSKNAPYGTKKVEEVKALTFNATDFLMSKGIKALVVACNTATSVTINDLRENYDIPIIGIEPALKPAVELKKGGKIIIMATPMTLAEKKFANLMDLYKETEDIEPLPCPGLPELIEQGIVSGDVIYNYLKDKFSKYDNEKISSIVLGCTHYPFIEETLKEVTHNKACIIDGSFGTSRELKRQLKNSNMLTEENRVGKVTIFNSREDKDIIDLSYKLFNMK</sequence>
<evidence type="ECO:0000255" key="1">
    <source>
        <dbReference type="HAMAP-Rule" id="MF_00258"/>
    </source>
</evidence>
<feature type="chain" id="PRO_1000047557" description="Glutamate racemase">
    <location>
        <begin position="1"/>
        <end position="257"/>
    </location>
</feature>
<feature type="active site" description="Proton donor/acceptor" evidence="1">
    <location>
        <position position="75"/>
    </location>
</feature>
<feature type="active site" description="Proton donor/acceptor" evidence="1">
    <location>
        <position position="185"/>
    </location>
</feature>
<feature type="binding site" evidence="1">
    <location>
        <begin position="12"/>
        <end position="13"/>
    </location>
    <ligand>
        <name>substrate</name>
    </ligand>
</feature>
<feature type="binding site" evidence="1">
    <location>
        <begin position="44"/>
        <end position="45"/>
    </location>
    <ligand>
        <name>substrate</name>
    </ligand>
</feature>
<feature type="binding site" evidence="1">
    <location>
        <begin position="76"/>
        <end position="77"/>
    </location>
    <ligand>
        <name>substrate</name>
    </ligand>
</feature>
<feature type="binding site" evidence="1">
    <location>
        <begin position="186"/>
        <end position="187"/>
    </location>
    <ligand>
        <name>substrate</name>
    </ligand>
</feature>